<feature type="chain" id="PRO_1000130779" description="RNase adapter protein RapZ">
    <location>
        <begin position="1"/>
        <end position="284"/>
    </location>
</feature>
<feature type="region of interest" description="RNA-binding" evidence="1">
    <location>
        <begin position="266"/>
        <end position="284"/>
    </location>
</feature>
<feature type="binding site" evidence="1">
    <location>
        <begin position="8"/>
        <end position="15"/>
    </location>
    <ligand>
        <name>ATP</name>
        <dbReference type="ChEBI" id="CHEBI:30616"/>
    </ligand>
</feature>
<feature type="binding site" evidence="1">
    <location>
        <begin position="56"/>
        <end position="59"/>
    </location>
    <ligand>
        <name>GTP</name>
        <dbReference type="ChEBI" id="CHEBI:37565"/>
    </ligand>
</feature>
<reference key="1">
    <citation type="journal article" date="2011" name="J. Bacteriol.">
        <title>Comparative genomics of 28 Salmonella enterica isolates: evidence for CRISPR-mediated adaptive sublineage evolution.</title>
        <authorList>
            <person name="Fricke W.F."/>
            <person name="Mammel M.K."/>
            <person name="McDermott P.F."/>
            <person name="Tartera C."/>
            <person name="White D.G."/>
            <person name="Leclerc J.E."/>
            <person name="Ravel J."/>
            <person name="Cebula T.A."/>
        </authorList>
    </citation>
    <scope>NUCLEOTIDE SEQUENCE [LARGE SCALE GENOMIC DNA]</scope>
    <source>
        <strain>SL476</strain>
    </source>
</reference>
<protein>
    <recommendedName>
        <fullName evidence="1">RNase adapter protein RapZ</fullName>
    </recommendedName>
</protein>
<gene>
    <name evidence="1" type="primary">rapZ</name>
    <name type="ordered locus">SeHA_C3620</name>
</gene>
<comment type="function">
    <text evidence="1">Modulates the synthesis of GlmS, by affecting the processing and stability of the regulatory small RNA GlmZ. When glucosamine-6-phosphate (GlcN6P) concentrations are high in the cell, RapZ binds GlmZ and targets it to cleavage by RNase E. Consequently, GlmZ is inactivated and unable to activate GlmS synthesis. Under low GlcN6P concentrations, RapZ is sequestered and inactivated by an other regulatory small RNA, GlmY, preventing GlmZ degradation and leading to synthesis of GlmS.</text>
</comment>
<comment type="subunit">
    <text evidence="1">Homotrimer.</text>
</comment>
<comment type="similarity">
    <text evidence="1">Belongs to the RapZ-like family. RapZ subfamily.</text>
</comment>
<sequence length="284" mass="32464">MVLMIVSGRSGSGKSVALRALEDMGFYCVDNLPVVLLPDLARTLADRQISAAVSIDVRNMPESPEIFEQAMNNLPGAFSPQLLFLDADRNTLIRRYSDTRRLHPLSSKNLSLESAIDKESDLLEPLRSRADLIVDTSEMSVHELAEMLRTRLLGKRERELTMVFESFGFKHGIPIDADYVFDVRFLPNPHWDPKLRPMTGLDKPVAAFLDRHTEVHNFIYQTRSYLELWLPMLETNNRSYLTVAIGCTGGKHRSVYIAEQLADYFRSRGKNVQSRHRTLEKRKT</sequence>
<organism>
    <name type="scientific">Salmonella heidelberg (strain SL476)</name>
    <dbReference type="NCBI Taxonomy" id="454169"/>
    <lineage>
        <taxon>Bacteria</taxon>
        <taxon>Pseudomonadati</taxon>
        <taxon>Pseudomonadota</taxon>
        <taxon>Gammaproteobacteria</taxon>
        <taxon>Enterobacterales</taxon>
        <taxon>Enterobacteriaceae</taxon>
        <taxon>Salmonella</taxon>
    </lineage>
</organism>
<proteinExistence type="inferred from homology"/>
<evidence type="ECO:0000255" key="1">
    <source>
        <dbReference type="HAMAP-Rule" id="MF_00636"/>
    </source>
</evidence>
<name>RAPZ_SALHS</name>
<dbReference type="EMBL" id="CP001120">
    <property type="protein sequence ID" value="ACF66176.1"/>
    <property type="molecule type" value="Genomic_DNA"/>
</dbReference>
<dbReference type="RefSeq" id="WP_000243749.1">
    <property type="nucleotide sequence ID" value="NC_011083.1"/>
</dbReference>
<dbReference type="SMR" id="B4TJP8"/>
<dbReference type="KEGG" id="seh:SeHA_C3620"/>
<dbReference type="HOGENOM" id="CLU_059558_1_1_6"/>
<dbReference type="Proteomes" id="UP000001866">
    <property type="component" value="Chromosome"/>
</dbReference>
<dbReference type="GO" id="GO:0005524">
    <property type="term" value="F:ATP binding"/>
    <property type="evidence" value="ECO:0007669"/>
    <property type="project" value="UniProtKB-UniRule"/>
</dbReference>
<dbReference type="GO" id="GO:0005525">
    <property type="term" value="F:GTP binding"/>
    <property type="evidence" value="ECO:0007669"/>
    <property type="project" value="UniProtKB-UniRule"/>
</dbReference>
<dbReference type="GO" id="GO:0003723">
    <property type="term" value="F:RNA binding"/>
    <property type="evidence" value="ECO:0007669"/>
    <property type="project" value="UniProtKB-KW"/>
</dbReference>
<dbReference type="Gene3D" id="3.40.50.300">
    <property type="entry name" value="P-loop containing nucleotide triphosphate hydrolases"/>
    <property type="match status" value="1"/>
</dbReference>
<dbReference type="HAMAP" id="MF_00636">
    <property type="entry name" value="RapZ_like"/>
    <property type="match status" value="1"/>
</dbReference>
<dbReference type="InterPro" id="IPR027417">
    <property type="entry name" value="P-loop_NTPase"/>
</dbReference>
<dbReference type="InterPro" id="IPR005337">
    <property type="entry name" value="RapZ-like"/>
</dbReference>
<dbReference type="InterPro" id="IPR053930">
    <property type="entry name" value="RapZ-like_N"/>
</dbReference>
<dbReference type="InterPro" id="IPR053931">
    <property type="entry name" value="RapZ_C"/>
</dbReference>
<dbReference type="NCBIfam" id="NF003828">
    <property type="entry name" value="PRK05416.1"/>
    <property type="match status" value="1"/>
</dbReference>
<dbReference type="PANTHER" id="PTHR30448">
    <property type="entry name" value="RNASE ADAPTER PROTEIN RAPZ"/>
    <property type="match status" value="1"/>
</dbReference>
<dbReference type="PANTHER" id="PTHR30448:SF0">
    <property type="entry name" value="RNASE ADAPTER PROTEIN RAPZ"/>
    <property type="match status" value="1"/>
</dbReference>
<dbReference type="Pfam" id="PF22740">
    <property type="entry name" value="PapZ_C"/>
    <property type="match status" value="1"/>
</dbReference>
<dbReference type="Pfam" id="PF03668">
    <property type="entry name" value="RapZ-like_N"/>
    <property type="match status" value="1"/>
</dbReference>
<dbReference type="PIRSF" id="PIRSF005052">
    <property type="entry name" value="P-loopkin"/>
    <property type="match status" value="1"/>
</dbReference>
<dbReference type="SUPFAM" id="SSF52540">
    <property type="entry name" value="P-loop containing nucleoside triphosphate hydrolases"/>
    <property type="match status" value="1"/>
</dbReference>
<keyword id="KW-0067">ATP-binding</keyword>
<keyword id="KW-0342">GTP-binding</keyword>
<keyword id="KW-0547">Nucleotide-binding</keyword>
<keyword id="KW-0694">RNA-binding</keyword>
<accession>B4TJP8</accession>